<protein>
    <recommendedName>
        <fullName evidence="1">UPF0194 membrane protein Ent638_1286</fullName>
    </recommendedName>
</protein>
<evidence type="ECO:0000255" key="1">
    <source>
        <dbReference type="HAMAP-Rule" id="MF_01304"/>
    </source>
</evidence>
<accession>A4W8D7</accession>
<organism>
    <name type="scientific">Enterobacter sp. (strain 638)</name>
    <dbReference type="NCBI Taxonomy" id="399742"/>
    <lineage>
        <taxon>Bacteria</taxon>
        <taxon>Pseudomonadati</taxon>
        <taxon>Pseudomonadota</taxon>
        <taxon>Gammaproteobacteria</taxon>
        <taxon>Enterobacterales</taxon>
        <taxon>Enterobacteriaceae</taxon>
        <taxon>Enterobacter</taxon>
    </lineage>
</organism>
<reference key="1">
    <citation type="journal article" date="2010" name="PLoS Genet.">
        <title>Genome sequence of the plant growth promoting endophytic bacterium Enterobacter sp. 638.</title>
        <authorList>
            <person name="Taghavi S."/>
            <person name="van der Lelie D."/>
            <person name="Hoffman A."/>
            <person name="Zhang Y.B."/>
            <person name="Walla M.D."/>
            <person name="Vangronsveld J."/>
            <person name="Newman L."/>
            <person name="Monchy S."/>
        </authorList>
    </citation>
    <scope>NUCLEOTIDE SEQUENCE [LARGE SCALE GENOMIC DNA]</scope>
    <source>
        <strain>638</strain>
    </source>
</reference>
<name>Y1286_ENT38</name>
<feature type="signal peptide" evidence="1">
    <location>
        <begin position="1"/>
        <end position="16"/>
    </location>
</feature>
<feature type="chain" id="PRO_5000237768" description="UPF0194 membrane protein Ent638_1286">
    <location>
        <begin position="17"/>
        <end position="331"/>
    </location>
</feature>
<feature type="coiled-coil region" evidence="1">
    <location>
        <begin position="107"/>
        <end position="208"/>
    </location>
</feature>
<dbReference type="EMBL" id="CP000653">
    <property type="protein sequence ID" value="ABP59967.1"/>
    <property type="molecule type" value="Genomic_DNA"/>
</dbReference>
<dbReference type="RefSeq" id="WP_012016686.1">
    <property type="nucleotide sequence ID" value="NC_009436.1"/>
</dbReference>
<dbReference type="SMR" id="A4W8D7"/>
<dbReference type="STRING" id="399742.Ent638_1286"/>
<dbReference type="KEGG" id="ent:Ent638_1286"/>
<dbReference type="eggNOG" id="COG0845">
    <property type="taxonomic scope" value="Bacteria"/>
</dbReference>
<dbReference type="HOGENOM" id="CLU_018816_6_3_6"/>
<dbReference type="OrthoDB" id="9813967at2"/>
<dbReference type="Proteomes" id="UP000000230">
    <property type="component" value="Chromosome"/>
</dbReference>
<dbReference type="GO" id="GO:0042597">
    <property type="term" value="C:periplasmic space"/>
    <property type="evidence" value="ECO:0007669"/>
    <property type="project" value="UniProtKB-SubCell"/>
</dbReference>
<dbReference type="FunFam" id="1.10.287.470:FF:000004">
    <property type="entry name" value="UPF0194 membrane protein YbhG"/>
    <property type="match status" value="1"/>
</dbReference>
<dbReference type="Gene3D" id="2.40.30.170">
    <property type="match status" value="1"/>
</dbReference>
<dbReference type="Gene3D" id="2.40.50.100">
    <property type="match status" value="2"/>
</dbReference>
<dbReference type="Gene3D" id="1.10.287.470">
    <property type="entry name" value="Helix hairpin bin"/>
    <property type="match status" value="1"/>
</dbReference>
<dbReference type="HAMAP" id="MF_01304">
    <property type="entry name" value="UPF0194"/>
    <property type="match status" value="1"/>
</dbReference>
<dbReference type="InterPro" id="IPR032317">
    <property type="entry name" value="CusB_D23"/>
</dbReference>
<dbReference type="InterPro" id="IPR022936">
    <property type="entry name" value="UPF0194_membrane_YbhG"/>
</dbReference>
<dbReference type="InterPro" id="IPR050465">
    <property type="entry name" value="UPF0194_transport"/>
</dbReference>
<dbReference type="NCBIfam" id="NF002939">
    <property type="entry name" value="PRK03598.1"/>
    <property type="match status" value="1"/>
</dbReference>
<dbReference type="PANTHER" id="PTHR32347">
    <property type="entry name" value="EFFLUX SYSTEM COMPONENT YKNX-RELATED"/>
    <property type="match status" value="1"/>
</dbReference>
<dbReference type="PANTHER" id="PTHR32347:SF29">
    <property type="entry name" value="UPF0194 MEMBRANE PROTEIN YBHG"/>
    <property type="match status" value="1"/>
</dbReference>
<dbReference type="Pfam" id="PF16576">
    <property type="entry name" value="HlyD_D23"/>
    <property type="match status" value="1"/>
</dbReference>
<dbReference type="SUPFAM" id="SSF111369">
    <property type="entry name" value="HlyD-like secretion proteins"/>
    <property type="match status" value="3"/>
</dbReference>
<keyword id="KW-0175">Coiled coil</keyword>
<keyword id="KW-0574">Periplasm</keyword>
<keyword id="KW-0732">Signal</keyword>
<comment type="subcellular location">
    <subcellularLocation>
        <location evidence="1">Periplasm</location>
    </subcellularLocation>
</comment>
<comment type="similarity">
    <text evidence="1">Belongs to the UPF0194 family.</text>
</comment>
<gene>
    <name type="ordered locus">Ent638_1286</name>
</gene>
<proteinExistence type="inferred from homology"/>
<sequence>MKKPVVVILAVVVLLAAGIGGWLWYQSQQDRGLTLYGNVDIRTLNMSFRVGGRLESLAVDEGDTVKSGQLLGQLDKAPYENALMQAKASVSVAQAQYDLMLAGYRDEEVAQAEAAVKQAKAAYDYSQNFYNRQQGLWKSRTISANDLENARSSRDQAQATLKSAQDKLSQYRTGNRPQDIAQAKANLEQAQAQLAQAELDLHDTTLIAPSNGTLMTRAVEPGSMLSAGSTVLTLSLTRPVWVRAYIDEPNLSQAQPGREILLYTDGRPDKPYHGKIGFVSPTAEFTPKTVETPDLRTDLVYRLRIIVTDADDALRQGMPITVKFNDGEGHE</sequence>